<keyword id="KW-0903">Direct protein sequencing</keyword>
<keyword id="KW-1015">Disulfide bond</keyword>
<keyword id="KW-0328">Glycosyltransferase</keyword>
<keyword id="KW-0520">NAD</keyword>
<keyword id="KW-0521">NADP</keyword>
<keyword id="KW-0548">Nucleotidyltransferase</keyword>
<keyword id="KW-1185">Reference proteome</keyword>
<keyword id="KW-0964">Secreted</keyword>
<keyword id="KW-0732">Signal</keyword>
<keyword id="KW-0808">Transferase</keyword>
<keyword id="KW-0865">Zymogen</keyword>
<organism>
    <name type="scientific">Gallus gallus</name>
    <name type="common">Chicken</name>
    <dbReference type="NCBI Taxonomy" id="9031"/>
    <lineage>
        <taxon>Eukaryota</taxon>
        <taxon>Metazoa</taxon>
        <taxon>Chordata</taxon>
        <taxon>Craniata</taxon>
        <taxon>Vertebrata</taxon>
        <taxon>Euteleostomi</taxon>
        <taxon>Archelosauria</taxon>
        <taxon>Archosauria</taxon>
        <taxon>Dinosauria</taxon>
        <taxon>Saurischia</taxon>
        <taxon>Theropoda</taxon>
        <taxon>Coelurosauria</taxon>
        <taxon>Aves</taxon>
        <taxon>Neognathae</taxon>
        <taxon>Galloanserae</taxon>
        <taxon>Galliformes</taxon>
        <taxon>Phasianidae</taxon>
        <taxon>Phasianinae</taxon>
        <taxon>Gallus</taxon>
    </lineage>
</organism>
<sequence>MELLALRWVLLAGTLLSTSAASSALQEGDLGSITVIMDMALNSFDDQYLLCEDRMRARLQMENITEFSTNIAYAVTWRQAAAEWQKRWGHLARPMQLIREQAIALLAYSASSRMCTLFNEATRQGGRSHQDYIHSYHFKTLHFFLTQALFALRASQPRCYYVYRGVRGIRFMTQRGKSVRFGQFTSTSLRKEATVNFGQDTLFVVKTCYGVPIKQFSFFPSEDEVLIPPFEVFEVINFSNDRGSVKIQLHSKGKMSTHNCELLKPQGGQWGRGHQEVGLGLSPGLSLPVLPCRRRVWEGLGHREGDPIPAAV</sequence>
<proteinExistence type="evidence at protein level"/>
<feature type="signal peptide" evidence="2">
    <location>
        <begin position="1"/>
        <end position="20"/>
    </location>
</feature>
<feature type="propeptide" id="PRO_0000019335">
    <location>
        <begin position="21"/>
        <end position="31"/>
    </location>
</feature>
<feature type="chain" id="PRO_0000019336" description="NAD(P)(+)--arginine ADP-ribosyltransferase 1">
    <location>
        <begin position="32"/>
        <end position="266"/>
    </location>
</feature>
<feature type="propeptide" id="PRO_0000019337" evidence="2">
    <location>
        <begin position="267"/>
        <end position="312"/>
    </location>
</feature>
<feature type="domain" description="TR mART core" evidence="3">
    <location>
        <begin position="71"/>
        <end position="256"/>
    </location>
</feature>
<feature type="active site" evidence="3">
    <location>
        <position position="164"/>
    </location>
</feature>
<feature type="active site" evidence="3">
    <location>
        <position position="186"/>
    </location>
</feature>
<feature type="active site" evidence="3">
    <location>
        <position position="224"/>
    </location>
</feature>
<feature type="binding site" evidence="1">
    <location>
        <position position="108"/>
    </location>
    <ligand>
        <name>NAD(+)</name>
        <dbReference type="ChEBI" id="CHEBI:57540"/>
    </ligand>
</feature>
<feature type="binding site" evidence="1">
    <location>
        <position position="164"/>
    </location>
    <ligand>
        <name>NAD(+)</name>
        <dbReference type="ChEBI" id="CHEBI:57540"/>
    </ligand>
</feature>
<feature type="binding site" evidence="1">
    <location>
        <position position="183"/>
    </location>
    <ligand>
        <name>NAD(+)</name>
        <dbReference type="ChEBI" id="CHEBI:57540"/>
    </ligand>
</feature>
<feature type="binding site" evidence="1">
    <location>
        <position position="217"/>
    </location>
    <ligand>
        <name>NAD(+)</name>
        <dbReference type="ChEBI" id="CHEBI:57540"/>
    </ligand>
</feature>
<feature type="disulfide bond" evidence="1">
    <location>
        <begin position="51"/>
        <end position="260"/>
    </location>
</feature>
<feature type="disulfide bond" evidence="1">
    <location>
        <begin position="159"/>
        <end position="208"/>
    </location>
</feature>
<dbReference type="EC" id="2.4.2.31"/>
<dbReference type="EMBL" id="D31864">
    <property type="protein sequence ID" value="BAA06664.1"/>
    <property type="molecule type" value="mRNA"/>
</dbReference>
<dbReference type="PIR" id="A55461">
    <property type="entry name" value="A55461"/>
</dbReference>
<dbReference type="RefSeq" id="NP_990444.1">
    <property type="nucleotide sequence ID" value="NM_205113.1"/>
</dbReference>
<dbReference type="SMR" id="P55806"/>
<dbReference type="FunCoup" id="P55806">
    <property type="interactions" value="199"/>
</dbReference>
<dbReference type="GeneID" id="396008"/>
<dbReference type="CTD" id="396008"/>
<dbReference type="VEuPathDB" id="HostDB:geneid_395661"/>
<dbReference type="InParanoid" id="P55806"/>
<dbReference type="OrthoDB" id="423533at2759"/>
<dbReference type="PhylomeDB" id="P55806"/>
<dbReference type="PRO" id="PR:P55806"/>
<dbReference type="Proteomes" id="UP000000539">
    <property type="component" value="Unassembled WGS sequence"/>
</dbReference>
<dbReference type="GO" id="GO:0044194">
    <property type="term" value="C:cytolytic granule"/>
    <property type="evidence" value="ECO:0000314"/>
    <property type="project" value="AgBase"/>
</dbReference>
<dbReference type="GO" id="GO:0005615">
    <property type="term" value="C:extracellular space"/>
    <property type="evidence" value="ECO:0000314"/>
    <property type="project" value="AgBase"/>
</dbReference>
<dbReference type="GO" id="GO:0003950">
    <property type="term" value="F:NAD+ poly-ADP-ribosyltransferase activity"/>
    <property type="evidence" value="ECO:0000314"/>
    <property type="project" value="AgBase"/>
</dbReference>
<dbReference type="GO" id="GO:0106274">
    <property type="term" value="F:NAD+-protein-arginine ADP-ribosyltransferase activity"/>
    <property type="evidence" value="ECO:0007669"/>
    <property type="project" value="UniProtKB-EC"/>
</dbReference>
<dbReference type="GO" id="GO:0016779">
    <property type="term" value="F:nucleotidyltransferase activity"/>
    <property type="evidence" value="ECO:0007669"/>
    <property type="project" value="UniProtKB-KW"/>
</dbReference>
<dbReference type="GO" id="GO:0046677">
    <property type="term" value="P:response to antibiotic"/>
    <property type="evidence" value="ECO:0000314"/>
    <property type="project" value="AgBase"/>
</dbReference>
<dbReference type="FunFam" id="3.90.176.10:FF:000001">
    <property type="entry name" value="NAD(P)(+)--arginine ADP-ribosyltransferase"/>
    <property type="match status" value="1"/>
</dbReference>
<dbReference type="Gene3D" id="3.90.176.10">
    <property type="entry name" value="Toxin ADP-ribosyltransferase, Chain A, domain 1"/>
    <property type="match status" value="1"/>
</dbReference>
<dbReference type="InterPro" id="IPR050999">
    <property type="entry name" value="ADP-ribosyltransferase_ARG"/>
</dbReference>
<dbReference type="InterPro" id="IPR000768">
    <property type="entry name" value="ART"/>
</dbReference>
<dbReference type="PANTHER" id="PTHR10339">
    <property type="entry name" value="ADP-RIBOSYLTRANSFERASE"/>
    <property type="match status" value="1"/>
</dbReference>
<dbReference type="PANTHER" id="PTHR10339:SF19">
    <property type="entry name" value="GPI-LINKED NAD(P)(+)--ARGININE ADP-RIBOSYLTRANSFERASE 1"/>
    <property type="match status" value="1"/>
</dbReference>
<dbReference type="Pfam" id="PF01129">
    <property type="entry name" value="ART"/>
    <property type="match status" value="1"/>
</dbReference>
<dbReference type="PRINTS" id="PR00970">
    <property type="entry name" value="RIBTRNSFRASE"/>
</dbReference>
<dbReference type="SUPFAM" id="SSF56399">
    <property type="entry name" value="ADP-ribosylation"/>
    <property type="match status" value="1"/>
</dbReference>
<dbReference type="PROSITE" id="PS01291">
    <property type="entry name" value="ART"/>
    <property type="match status" value="1"/>
</dbReference>
<dbReference type="PROSITE" id="PS51996">
    <property type="entry name" value="TR_MART"/>
    <property type="match status" value="1"/>
</dbReference>
<name>NRT1_CHICK</name>
<evidence type="ECO:0000250" key="1"/>
<evidence type="ECO:0000255" key="2"/>
<evidence type="ECO:0000255" key="3">
    <source>
        <dbReference type="PROSITE-ProRule" id="PRU01340"/>
    </source>
</evidence>
<evidence type="ECO:0000305" key="4"/>
<comment type="catalytic activity">
    <reaction>
        <text>L-arginyl-[protein] + NAD(+) = N(omega)-(ADP-D-ribosyl)-L-arginyl-[protein] + nicotinamide + H(+)</text>
        <dbReference type="Rhea" id="RHEA:19149"/>
        <dbReference type="Rhea" id="RHEA-COMP:10532"/>
        <dbReference type="Rhea" id="RHEA-COMP:15087"/>
        <dbReference type="ChEBI" id="CHEBI:15378"/>
        <dbReference type="ChEBI" id="CHEBI:17154"/>
        <dbReference type="ChEBI" id="CHEBI:29965"/>
        <dbReference type="ChEBI" id="CHEBI:57540"/>
        <dbReference type="ChEBI" id="CHEBI:142554"/>
        <dbReference type="EC" id="2.4.2.31"/>
    </reaction>
</comment>
<comment type="subcellular location">
    <subcellularLocation>
        <location>Secreted</location>
        <location>Extracellular space</location>
    </subcellularLocation>
    <text>The mature enzyme is probably secreted from granulocytes into the extracellular space.</text>
</comment>
<comment type="similarity">
    <text evidence="4">Belongs to the Arg-specific ADP-ribosyltransferase family.</text>
</comment>
<accession>P55806</accession>
<reference key="1">
    <citation type="journal article" date="1994" name="J. Biol. Chem.">
        <title>Cloning and expression of cDNA for arginine-specific ADP-ribosyltransferase from chicken bone marrow cells.</title>
        <authorList>
            <person name="Tsuchiya M."/>
            <person name="Hara N."/>
            <person name="Yamada K."/>
            <person name="Osago H."/>
            <person name="Shimoyama M."/>
        </authorList>
    </citation>
    <scope>NUCLEOTIDE SEQUENCE [MRNA]</scope>
    <scope>PARTIAL PROTEIN SEQUENCE</scope>
    <source>
        <strain>White leghorn</strain>
        <tissue>Bone marrow</tissue>
    </source>
</reference>
<protein>
    <recommendedName>
        <fullName>NAD(P)(+)--arginine ADP-ribosyltransferase 1</fullName>
        <ecNumber>2.4.2.31</ecNumber>
    </recommendedName>
    <alternativeName>
        <fullName>Mono(ADP-ribosyl)transferase 1</fullName>
        <shortName>AT1</shortName>
    </alternativeName>
</protein>